<proteinExistence type="evidence at protein level"/>
<comment type="function">
    <text evidence="3 4 5 9 11 12">Component of the nuclear LSM2-LSM8 complex, which is involved in spliceosome assembly (PubMed:10747033, PubMed:12077351, PubMed:12438310). The LSM2-LSM8 complex plays a role in the biogenesis of the spliceosomal U4/U6-U5 tri-snRNP complex by accelerating PRP24-mediated annealing of U4/U6 di-snRNA (PubMed:10747033, PubMed:24240276, PubMed:29717126). The LSM2-LSM8 complex binds U6 snRNA terminating with a non-cyclic 3' phosphate group (PubMed:29717126). LSM2-LSM8 is probably also involved in degradation of nuclear pre-mRNA by targeting them for decapping (PubMed:15485930). LSM2-LSM8 could be involved in processing of pre-tRNAs, pre-rRNAs and U3 snoRNA, although involvement may be indirect (PubMed:12077351, PubMed:12438310, PubMed:15075370).</text>
</comment>
<comment type="subunit">
    <text evidence="2 3 10 11 12">Component of the heptameric LSM2-LSM8 complex that forms a seven-membered ring structure with a donut shape; an RNA strand can pass through the hole in the center of the ring structure (PubMed:10747033, PubMed:24240276, PubMed:29717126). The LSm subunits are arranged in the order LSM8, LSM2, LSM3, LSM6, LSM5, LSM7 and LSM4 (PubMed:24240276). Component of the spliceosome U4/U6-U5 tri-snRNP complex composed of the U4, U6 and U5 snRNAs and at least PRP3, PRP4, PRP6, PRP8, PRP18, PRP31, PRP38, SNU13, SNU23, SNU66, SNU114, SPP381, SMB1, SMD1, SMD2, SMD3, SMX2, SMX3, LSM2, LSM3, LSM4, LSM5, LSM6, LSM7, LSM8, BRR2 and DIB1 (PubMed:10449419, PubMed:18953335, PubMed:24240276).</text>
</comment>
<comment type="interaction">
    <interactant intactId="EBI-313">
        <id>P47093</id>
    </interactant>
    <interactant intactId="EBI-8579">
        <id>Q99181</id>
        <label>HSH49</label>
    </interactant>
    <organismsDiffer>false</organismsDiffer>
    <experiments>3</experiments>
</comment>
<comment type="interaction">
    <interactant intactId="EBI-313">
        <id>P47093</id>
    </interactant>
    <interactant intactId="EBI-180">
        <id>P38203</id>
        <label>LSM2</label>
    </interactant>
    <organismsDiffer>false</organismsDiffer>
    <experiments>11</experiments>
</comment>
<comment type="interaction">
    <interactant intactId="EBI-313">
        <id>P47093</id>
    </interactant>
    <interactant intactId="EBI-10227">
        <id>P57743</id>
        <label>LSM3</label>
    </interactant>
    <organismsDiffer>false</organismsDiffer>
    <experiments>3</experiments>
</comment>
<comment type="interaction">
    <interactant intactId="EBI-313">
        <id>P47093</id>
    </interactant>
    <interactant intactId="EBI-188">
        <id>P40070</id>
        <label>LSM4</label>
    </interactant>
    <organismsDiffer>false</organismsDiffer>
    <experiments>4</experiments>
</comment>
<comment type="interaction">
    <interactant intactId="EBI-313">
        <id>P47093</id>
    </interactant>
    <interactant intactId="EBI-196">
        <id>Q06406</id>
        <label>LSM6</label>
    </interactant>
    <organismsDiffer>false</organismsDiffer>
    <experiments>5</experiments>
</comment>
<comment type="interaction">
    <interactant intactId="EBI-313">
        <id>P47093</id>
    </interactant>
    <interactant intactId="EBI-141">
        <id>P53905</id>
        <label>LSM7</label>
    </interactant>
    <organismsDiffer>false</organismsDiffer>
    <experiments>3</experiments>
</comment>
<comment type="interaction">
    <interactant intactId="EBI-313">
        <id>P47093</id>
    </interactant>
    <interactant intactId="EBI-212">
        <id>P49960</id>
        <label>PRP24</label>
    </interactant>
    <organismsDiffer>false</organismsDiffer>
    <experiments>3</experiments>
</comment>
<comment type="interaction">
    <interactant intactId="EBI-313">
        <id>P47093</id>
    </interactant>
    <interactant intactId="EBI-219">
        <id>P20053</id>
        <label>PRP4</label>
    </interactant>
    <organismsDiffer>false</organismsDiffer>
    <experiments>5</experiments>
</comment>
<comment type="subcellular location">
    <subcellularLocation>
        <location evidence="6 8">Nucleus</location>
    </subcellularLocation>
    <subcellularLocation>
        <location evidence="6">Cytoplasm</location>
    </subcellularLocation>
</comment>
<comment type="miscellaneous">
    <text evidence="7">Present with 1440 molecules/cell in log phase SD medium.</text>
</comment>
<comment type="similarity">
    <text evidence="13">Belongs to the snRNP Sm proteins family.</text>
</comment>
<comment type="sequence caution" evidence="13">
    <conflict type="erroneous initiation">
        <sequence resource="EMBL-CDS" id="CAA60945"/>
    </conflict>
</comment>
<comment type="sequence caution" evidence="13">
    <conflict type="erroneous initiation">
        <sequence resource="EMBL-CDS" id="CAA89547"/>
    </conflict>
</comment>
<name>LSM8_YEAST</name>
<gene>
    <name type="primary">LSM8</name>
    <name type="ordered locus">YJR022W</name>
    <name type="ORF">J1464</name>
    <name type="ORF">YJR83.16</name>
</gene>
<organism>
    <name type="scientific">Saccharomyces cerevisiae (strain ATCC 204508 / S288c)</name>
    <name type="common">Baker's yeast</name>
    <dbReference type="NCBI Taxonomy" id="559292"/>
    <lineage>
        <taxon>Eukaryota</taxon>
        <taxon>Fungi</taxon>
        <taxon>Dikarya</taxon>
        <taxon>Ascomycota</taxon>
        <taxon>Saccharomycotina</taxon>
        <taxon>Saccharomycetes</taxon>
        <taxon>Saccharomycetales</taxon>
        <taxon>Saccharomycetaceae</taxon>
        <taxon>Saccharomyces</taxon>
    </lineage>
</organism>
<accession>P47093</accession>
<accession>D6VWJ6</accession>
<evidence type="ECO:0000255" key="1">
    <source>
        <dbReference type="PROSITE-ProRule" id="PRU01346"/>
    </source>
</evidence>
<evidence type="ECO:0000269" key="2">
    <source>
    </source>
</evidence>
<evidence type="ECO:0000269" key="3">
    <source>
    </source>
</evidence>
<evidence type="ECO:0000269" key="4">
    <source>
    </source>
</evidence>
<evidence type="ECO:0000269" key="5">
    <source>
    </source>
</evidence>
<evidence type="ECO:0000269" key="6">
    <source>
    </source>
</evidence>
<evidence type="ECO:0000269" key="7">
    <source>
    </source>
</evidence>
<evidence type="ECO:0000269" key="8">
    <source>
    </source>
</evidence>
<evidence type="ECO:0000269" key="9">
    <source>
    </source>
</evidence>
<evidence type="ECO:0000269" key="10">
    <source>
    </source>
</evidence>
<evidence type="ECO:0000269" key="11">
    <source>
    </source>
</evidence>
<evidence type="ECO:0000269" key="12">
    <source>
    </source>
</evidence>
<evidence type="ECO:0000305" key="13"/>
<evidence type="ECO:0007744" key="14">
    <source>
        <dbReference type="PDB" id="5VSU"/>
    </source>
</evidence>
<evidence type="ECO:0007744" key="15">
    <source>
        <dbReference type="PDB" id="6ASO"/>
    </source>
</evidence>
<evidence type="ECO:0007829" key="16">
    <source>
        <dbReference type="PDB" id="4M7D"/>
    </source>
</evidence>
<evidence type="ECO:0007829" key="17">
    <source>
        <dbReference type="PDB" id="5VSU"/>
    </source>
</evidence>
<evidence type="ECO:0007829" key="18">
    <source>
        <dbReference type="PDB" id="6ASO"/>
    </source>
</evidence>
<protein>
    <recommendedName>
        <fullName evidence="13">LSM2-LSM8 complex subunit LSM8</fullName>
    </recommendedName>
</protein>
<reference key="1">
    <citation type="journal article" date="1996" name="EMBO J.">
        <title>Complete nucleotide sequence of Saccharomyces cerevisiae chromosome X.</title>
        <authorList>
            <person name="Galibert F."/>
            <person name="Alexandraki D."/>
            <person name="Baur A."/>
            <person name="Boles E."/>
            <person name="Chalwatzis N."/>
            <person name="Chuat J.-C."/>
            <person name="Coster F."/>
            <person name="Cziepluch C."/>
            <person name="de Haan M."/>
            <person name="Domdey H."/>
            <person name="Durand P."/>
            <person name="Entian K.-D."/>
            <person name="Gatius M."/>
            <person name="Goffeau A."/>
            <person name="Grivell L.A."/>
            <person name="Hennemann A."/>
            <person name="Herbert C.J."/>
            <person name="Heumann K."/>
            <person name="Hilger F."/>
            <person name="Hollenberg C.P."/>
            <person name="Huang M.-E."/>
            <person name="Jacq C."/>
            <person name="Jauniaux J.-C."/>
            <person name="Katsoulou C."/>
            <person name="Kirchrath L."/>
            <person name="Kleine K."/>
            <person name="Kordes E."/>
            <person name="Koetter P."/>
            <person name="Liebl S."/>
            <person name="Louis E.J."/>
            <person name="Manus V."/>
            <person name="Mewes H.-W."/>
            <person name="Miosga T."/>
            <person name="Obermaier B."/>
            <person name="Perea J."/>
            <person name="Pohl T.M."/>
            <person name="Portetelle D."/>
            <person name="Pujol A."/>
            <person name="Purnelle B."/>
            <person name="Ramezani Rad M."/>
            <person name="Rasmussen S.W."/>
            <person name="Rose M."/>
            <person name="Rossau R."/>
            <person name="Schaaff-Gerstenschlaeger I."/>
            <person name="Smits P.H.M."/>
            <person name="Scarcez T."/>
            <person name="Soriano N."/>
            <person name="To Van D."/>
            <person name="Tzermia M."/>
            <person name="Van Broekhoven A."/>
            <person name="Vandenbol M."/>
            <person name="Wedler H."/>
            <person name="von Wettstein D."/>
            <person name="Wambutt R."/>
            <person name="Zagulski M."/>
            <person name="Zollner A."/>
            <person name="Karpfinger-Hartl L."/>
        </authorList>
    </citation>
    <scope>NUCLEOTIDE SEQUENCE [LARGE SCALE GENOMIC DNA]</scope>
    <source>
        <strain>ATCC 204508 / S288c</strain>
    </source>
</reference>
<reference key="2">
    <citation type="journal article" date="2014" name="G3 (Bethesda)">
        <title>The reference genome sequence of Saccharomyces cerevisiae: Then and now.</title>
        <authorList>
            <person name="Engel S.R."/>
            <person name="Dietrich F.S."/>
            <person name="Fisk D.G."/>
            <person name="Binkley G."/>
            <person name="Balakrishnan R."/>
            <person name="Costanzo M.C."/>
            <person name="Dwight S.S."/>
            <person name="Hitz B.C."/>
            <person name="Karra K."/>
            <person name="Nash R.S."/>
            <person name="Weng S."/>
            <person name="Wong E.D."/>
            <person name="Lloyd P."/>
            <person name="Skrzypek M.S."/>
            <person name="Miyasato S.R."/>
            <person name="Simison M."/>
            <person name="Cherry J.M."/>
        </authorList>
    </citation>
    <scope>GENOME REANNOTATION</scope>
    <source>
        <strain>ATCC 204508 / S288c</strain>
    </source>
</reference>
<reference key="3">
    <citation type="journal article" date="1995" name="Yeast">
        <title>The sequence of 24.3 kb from chromosome X reveals five complete open reading frames, all of which correspond to new genes, and a tandem insertion of a Ty1 transposon.</title>
        <authorList>
            <person name="Zagulski M."/>
            <person name="Babinska B."/>
            <person name="Gromadka R."/>
            <person name="Migdalski A."/>
            <person name="Rytka J."/>
            <person name="Sulicka J."/>
            <person name="Herbert C.J."/>
        </authorList>
    </citation>
    <scope>NUCLEOTIDE SEQUENCE [GENOMIC DNA] OF 48-109</scope>
</reference>
<reference key="4">
    <citation type="journal article" date="1999" name="EMBO J.">
        <title>Identification by mass spectrometry and functional analysis of novel proteins of the yeast [U4/U6.U5] tri-snRNP.</title>
        <authorList>
            <person name="Gottschalk A."/>
            <person name="Neubauer G."/>
            <person name="Banroques J."/>
            <person name="Mann M."/>
            <person name="Luehrmann R."/>
            <person name="Fabrizio P."/>
        </authorList>
    </citation>
    <scope>SUBUNIT</scope>
    <scope>IDENTIFICATION IN THE U4/U5/U6 TRI-SNRNP COMPLEX</scope>
    <scope>IDENTIFICATION BY MASS SPECTROMETRY</scope>
</reference>
<reference key="5">
    <citation type="journal article" date="2000" name="EMBO J.">
        <title>A Sm-like protein complex that participates in mRNA degradation.</title>
        <authorList>
            <person name="Bouveret E."/>
            <person name="Rigaut G."/>
            <person name="Shevchenko A."/>
            <person name="Wilm M."/>
            <person name="Seraphin B."/>
        </authorList>
    </citation>
    <scope>FUNCTION</scope>
    <scope>IDENTIFICATION IN THE LSM2-LSM8 COMPLEX</scope>
    <scope>ASSOCIATION OF THE LSM2-LSM8 COMPLEX WITH U6 SNRNA</scope>
    <scope>IDENTIFICATION BY MASS SPECTROMETRY</scope>
</reference>
<reference key="6">
    <citation type="journal article" date="2002" name="Mol. Cell. Biol.">
        <title>Lsm proteins are required for normal processing of pre-tRNAs and their efficient association with La-homologous protein Lhp1p.</title>
        <authorList>
            <person name="Kufel J."/>
            <person name="Allmang C."/>
            <person name="Verdone L."/>
            <person name="Beggs J.D."/>
            <person name="Tollervey D."/>
        </authorList>
    </citation>
    <scope>FUNCTION IN PROCESSING OF PRE-TRNAS</scope>
</reference>
<reference key="7">
    <citation type="journal article" date="2003" name="J. Biol. Chem.">
        <title>Lsm Proteins are required for normal processing and stability of ribosomal RNAs.</title>
        <authorList>
            <person name="Kufel J."/>
            <person name="Allmang C."/>
            <person name="Petfalski E."/>
            <person name="Beggs J.D."/>
            <person name="Tollervey D."/>
        </authorList>
    </citation>
    <scope>FUNCTION IN PROCESSING OF PRE-RRNAS</scope>
</reference>
<reference key="8">
    <citation type="journal article" date="2003" name="Nature">
        <title>Sequencing and comparison of yeast species to identify genes and regulatory elements.</title>
        <authorList>
            <person name="Kellis M."/>
            <person name="Patterson N."/>
            <person name="Endrizzi M."/>
            <person name="Birren B.W."/>
            <person name="Lander E.S."/>
        </authorList>
    </citation>
    <scope>IDENTIFICATION OF PROBABLE INITIATION SITE</scope>
</reference>
<reference key="9">
    <citation type="journal article" date="2003" name="Nature">
        <title>Global analysis of protein expression in yeast.</title>
        <authorList>
            <person name="Ghaemmaghami S."/>
            <person name="Huh W.-K."/>
            <person name="Bower K."/>
            <person name="Howson R.W."/>
            <person name="Belle A."/>
            <person name="Dephoure N."/>
            <person name="O'Shea E.K."/>
            <person name="Weissman J.S."/>
        </authorList>
    </citation>
    <scope>LEVEL OF PROTEIN EXPRESSION [LARGE SCALE ANALYSIS]</scope>
</reference>
<reference key="10">
    <citation type="journal article" date="2003" name="Nature">
        <title>Global analysis of protein localization in budding yeast.</title>
        <authorList>
            <person name="Huh W.-K."/>
            <person name="Falvo J.V."/>
            <person name="Gerke L.C."/>
            <person name="Carroll A.S."/>
            <person name="Howson R.W."/>
            <person name="Weissman J.S."/>
            <person name="O'Shea E.K."/>
        </authorList>
    </citation>
    <scope>SUBCELLULAR LOCATION [LARGE SCALE ANALYSIS]</scope>
</reference>
<reference key="11">
    <citation type="journal article" date="2004" name="Mol. Biol. Cell">
        <title>An Lsm2-Lsm7 complex in Saccharomyces cerevisiae associates with the small nucleolar RNA snR5.</title>
        <authorList>
            <person name="Fernandez C.F."/>
            <person name="Pannone B.K."/>
            <person name="Chen X."/>
            <person name="Fuchs G."/>
            <person name="Wolin S.L."/>
        </authorList>
    </citation>
    <scope>FUNCTION</scope>
    <scope>SUBCELLULAR LOCATION</scope>
</reference>
<reference key="12">
    <citation type="journal article" date="2004" name="Mol. Cell. Biol.">
        <title>Nuclear pre-mRNA decapping and 5' degradation in yeast require the Lsm2-8p complex.</title>
        <authorList>
            <person name="Kufel J."/>
            <person name="Bousquet-Antonelli C."/>
            <person name="Beggs J.D."/>
            <person name="Tollervey D."/>
        </authorList>
    </citation>
    <scope>FUNCTION OF THE LSM2-LSM8 COMPLEX IN NUCLEAR MRNA DEGRADATION</scope>
</reference>
<reference key="13">
    <citation type="journal article" date="2008" name="Nat. Struct. Mol. Biol.">
        <title>Localization of Prp8, Brr2, Snu114 and U4/U6 proteins in the yeast tri-snRNP by electron microscopy.</title>
        <authorList>
            <person name="Hacker I."/>
            <person name="Sander B."/>
            <person name="Golas M.M."/>
            <person name="Wolf E."/>
            <person name="Karagoz E."/>
            <person name="Kastner B."/>
            <person name="Stark H."/>
            <person name="Fabrizio P."/>
            <person name="Luhrmann R."/>
        </authorList>
    </citation>
    <scope>SUBUNIT</scope>
    <scope>IDENTIFICATION IN THE U4/U5/U6 TRI-SNRNP COMPLEX</scope>
    <scope>ELECTRON MICROSCOPY</scope>
</reference>
<reference key="14">
    <citation type="journal article" date="2012" name="Proc. Natl. Acad. Sci. U.S.A.">
        <title>N-terminal acetylome analyses and functional insights of the N-terminal acetyltransferase NatB.</title>
        <authorList>
            <person name="Van Damme P."/>
            <person name="Lasa M."/>
            <person name="Polevoda B."/>
            <person name="Gazquez C."/>
            <person name="Elosegui-Artola A."/>
            <person name="Kim D.S."/>
            <person name="De Juan-Pardo E."/>
            <person name="Demeyer K."/>
            <person name="Hole K."/>
            <person name="Larrea E."/>
            <person name="Timmerman E."/>
            <person name="Prieto J."/>
            <person name="Arnesen T."/>
            <person name="Sherman F."/>
            <person name="Gevaert K."/>
            <person name="Aldabe R."/>
        </authorList>
    </citation>
    <scope>IDENTIFICATION BY MASS SPECTROMETRY [LARGE SCALE ANALYSIS]</scope>
</reference>
<reference key="15">
    <citation type="journal article" date="2014" name="Nature">
        <title>Crystal structures of the Lsm complex bound to the 3' end sequence of U6 small nuclear RNA.</title>
        <authorList>
            <person name="Zhou L."/>
            <person name="Hang J."/>
            <person name="Zhou Y."/>
            <person name="Wan R."/>
            <person name="Lu G."/>
            <person name="Yin P."/>
            <person name="Yan C."/>
            <person name="Shi Y."/>
        </authorList>
    </citation>
    <scope>X-RAY CRYSTALLOGRAPHY (2.60 ANGSTROMS) OF 1-96 OF LSM2-LSM8 COMPLEX</scope>
    <scope>SUBUNIT</scope>
    <scope>FUNCTION</scope>
    <scope>RNA-BINDING</scope>
    <scope>MUTAGENESIS OF ARG-57</scope>
</reference>
<reference evidence="14 15" key="16">
    <citation type="journal article" date="2018" name="Nat. Commun.">
        <title>Architecture of the U6 snRNP reveals specific recognition of 3'-end processed U6 snRNA.</title>
        <authorList>
            <person name="Montemayor E.J."/>
            <person name="Didychuk A.L."/>
            <person name="Yake A.D."/>
            <person name="Sidhu G.K."/>
            <person name="Brow D.A."/>
            <person name="Butcher S.E."/>
        </authorList>
    </citation>
    <scope>X-RAY CRYSTALLOGRAPHY (2.71 ANGSTROMS) IN COMPLEX WITH SNR6; LSM2; PRP24; LSM4; LSM5; LSM6; LSM7 AND LSM3</scope>
    <scope>FUNCTION</scope>
    <scope>IDENTIFICATION IN THE U4/U6 SNRNP ASSEMBLY</scope>
    <scope>MUTAGENESIS OF 87-LYS--LYS-92</scope>
</reference>
<dbReference type="EMBL" id="X87611">
    <property type="protein sequence ID" value="CAA60945.1"/>
    <property type="status" value="ALT_INIT"/>
    <property type="molecule type" value="Genomic_DNA"/>
</dbReference>
<dbReference type="EMBL" id="Z49522">
    <property type="protein sequence ID" value="CAA89547.1"/>
    <property type="status" value="ALT_INIT"/>
    <property type="molecule type" value="Genomic_DNA"/>
</dbReference>
<dbReference type="EMBL" id="X87297">
    <property type="status" value="NOT_ANNOTATED_CDS"/>
    <property type="molecule type" value="Genomic_DNA"/>
</dbReference>
<dbReference type="EMBL" id="BK006943">
    <property type="protein sequence ID" value="DAA08812.1"/>
    <property type="molecule type" value="Genomic_DNA"/>
</dbReference>
<dbReference type="PIR" id="S55211">
    <property type="entry name" value="S55211"/>
</dbReference>
<dbReference type="RefSeq" id="NP_012556.2">
    <property type="nucleotide sequence ID" value="NM_001181680.1"/>
</dbReference>
<dbReference type="PDB" id="3JCM">
    <property type="method" value="EM"/>
    <property type="resolution" value="3.80 A"/>
    <property type="chains" value="b=1-109"/>
</dbReference>
<dbReference type="PDB" id="4M77">
    <property type="method" value="X-ray"/>
    <property type="resolution" value="3.11 A"/>
    <property type="chains" value="A/H=1-109"/>
</dbReference>
<dbReference type="PDB" id="4M78">
    <property type="method" value="X-ray"/>
    <property type="resolution" value="2.79 A"/>
    <property type="chains" value="A/H=1-96"/>
</dbReference>
<dbReference type="PDB" id="4M7A">
    <property type="method" value="X-ray"/>
    <property type="resolution" value="2.78 A"/>
    <property type="chains" value="A/H=1-96"/>
</dbReference>
<dbReference type="PDB" id="4M7D">
    <property type="method" value="X-ray"/>
    <property type="resolution" value="2.60 A"/>
    <property type="chains" value="A/H=1-96"/>
</dbReference>
<dbReference type="PDB" id="5GAN">
    <property type="method" value="EM"/>
    <property type="resolution" value="3.60 A"/>
    <property type="chains" value="8=1-109"/>
</dbReference>
<dbReference type="PDB" id="5NRL">
    <property type="method" value="EM"/>
    <property type="resolution" value="7.20 A"/>
    <property type="chains" value="8=1-109"/>
</dbReference>
<dbReference type="PDB" id="5VSU">
    <property type="method" value="X-ray"/>
    <property type="resolution" value="3.10 A"/>
    <property type="chains" value="H=1-109"/>
</dbReference>
<dbReference type="PDB" id="5ZWM">
    <property type="method" value="EM"/>
    <property type="resolution" value="3.40 A"/>
    <property type="chains" value="z=1-109"/>
</dbReference>
<dbReference type="PDB" id="5ZWO">
    <property type="method" value="EM"/>
    <property type="resolution" value="3.90 A"/>
    <property type="chains" value="z=1-109"/>
</dbReference>
<dbReference type="PDB" id="6ASO">
    <property type="method" value="X-ray"/>
    <property type="resolution" value="2.71 A"/>
    <property type="chains" value="H=1-109"/>
</dbReference>
<dbReference type="PDBsum" id="3JCM"/>
<dbReference type="PDBsum" id="4M77"/>
<dbReference type="PDBsum" id="4M78"/>
<dbReference type="PDBsum" id="4M7A"/>
<dbReference type="PDBsum" id="4M7D"/>
<dbReference type="PDBsum" id="5GAN"/>
<dbReference type="PDBsum" id="5NRL"/>
<dbReference type="PDBsum" id="5VSU"/>
<dbReference type="PDBsum" id="5ZWM"/>
<dbReference type="PDBsum" id="5ZWO"/>
<dbReference type="PDBsum" id="6ASO"/>
<dbReference type="EMDB" id="EMD-3683"/>
<dbReference type="EMDB" id="EMD-6972"/>
<dbReference type="EMDB" id="EMD-6974"/>
<dbReference type="EMDB" id="EMD-8012"/>
<dbReference type="SMR" id="P47093"/>
<dbReference type="BioGRID" id="33776">
    <property type="interactions" value="480"/>
</dbReference>
<dbReference type="ComplexPortal" id="CPX-24">
    <property type="entry name" value="U6 small nuclear ribonucleoprotein complex"/>
</dbReference>
<dbReference type="ComplexPortal" id="CPX-25">
    <property type="entry name" value="U4/U6.U5 tri-small nuclear ribonucleoprotein complex"/>
</dbReference>
<dbReference type="ComplexPortal" id="CPX-32">
    <property type="entry name" value="U4/U6 small nuclear ribonucleoprotein complex"/>
</dbReference>
<dbReference type="ComplexPortal" id="CPX-44">
    <property type="entry name" value="LSM2-8 complex"/>
</dbReference>
<dbReference type="DIP" id="DIP-903N"/>
<dbReference type="FunCoup" id="P47093">
    <property type="interactions" value="540"/>
</dbReference>
<dbReference type="IntAct" id="P47093">
    <property type="interactions" value="83"/>
</dbReference>
<dbReference type="MINT" id="P47093"/>
<dbReference type="STRING" id="4932.YJR022W"/>
<dbReference type="iPTMnet" id="P47093"/>
<dbReference type="PaxDb" id="4932-YJR022W"/>
<dbReference type="PeptideAtlas" id="P47093"/>
<dbReference type="EnsemblFungi" id="YJR022W_mRNA">
    <property type="protein sequence ID" value="YJR022W"/>
    <property type="gene ID" value="YJR022W"/>
</dbReference>
<dbReference type="GeneID" id="853479"/>
<dbReference type="KEGG" id="sce:YJR022W"/>
<dbReference type="AGR" id="SGD:S000003783"/>
<dbReference type="SGD" id="S000003783">
    <property type="gene designation" value="LSM8"/>
</dbReference>
<dbReference type="VEuPathDB" id="FungiDB:YJR022W"/>
<dbReference type="eggNOG" id="KOG1784">
    <property type="taxonomic scope" value="Eukaryota"/>
</dbReference>
<dbReference type="HOGENOM" id="CLU_076902_8_1_1"/>
<dbReference type="InParanoid" id="P47093"/>
<dbReference type="OMA" id="NTLSCTM"/>
<dbReference type="OrthoDB" id="422364at2759"/>
<dbReference type="BioCyc" id="YEAST:G3O-31662-MONOMER"/>
<dbReference type="BioGRID-ORCS" id="853479">
    <property type="hits" value="0 hits in 10 CRISPR screens"/>
</dbReference>
<dbReference type="ChiTaRS" id="LSM8">
    <property type="organism name" value="yeast"/>
</dbReference>
<dbReference type="EvolutionaryTrace" id="P47093"/>
<dbReference type="PRO" id="PR:P47093"/>
<dbReference type="Proteomes" id="UP000002311">
    <property type="component" value="Chromosome X"/>
</dbReference>
<dbReference type="RNAct" id="P47093">
    <property type="molecule type" value="protein"/>
</dbReference>
<dbReference type="GO" id="GO:0005737">
    <property type="term" value="C:cytoplasm"/>
    <property type="evidence" value="ECO:0007669"/>
    <property type="project" value="UniProtKB-SubCell"/>
</dbReference>
<dbReference type="GO" id="GO:0005730">
    <property type="term" value="C:nucleolus"/>
    <property type="evidence" value="ECO:0000314"/>
    <property type="project" value="SGD"/>
</dbReference>
<dbReference type="GO" id="GO:0005634">
    <property type="term" value="C:nucleus"/>
    <property type="evidence" value="ECO:0000314"/>
    <property type="project" value="SGD"/>
</dbReference>
<dbReference type="GO" id="GO:0071011">
    <property type="term" value="C:precatalytic spliceosome"/>
    <property type="evidence" value="ECO:0000318"/>
    <property type="project" value="GO_Central"/>
</dbReference>
<dbReference type="GO" id="GO:0005681">
    <property type="term" value="C:spliceosomal complex"/>
    <property type="evidence" value="ECO:0000303"/>
    <property type="project" value="ComplexPortal"/>
</dbReference>
<dbReference type="GO" id="GO:0071001">
    <property type="term" value="C:U4/U6 snRNP"/>
    <property type="evidence" value="ECO:0000303"/>
    <property type="project" value="ComplexPortal"/>
</dbReference>
<dbReference type="GO" id="GO:0046540">
    <property type="term" value="C:U4/U6 x U5 tri-snRNP complex"/>
    <property type="evidence" value="ECO:0000314"/>
    <property type="project" value="SGD"/>
</dbReference>
<dbReference type="GO" id="GO:0005688">
    <property type="term" value="C:U6 snRNP"/>
    <property type="evidence" value="ECO:0000314"/>
    <property type="project" value="ComplexPortal"/>
</dbReference>
<dbReference type="GO" id="GO:0003729">
    <property type="term" value="F:mRNA binding"/>
    <property type="evidence" value="ECO:0000318"/>
    <property type="project" value="GO_Central"/>
</dbReference>
<dbReference type="GO" id="GO:0000398">
    <property type="term" value="P:mRNA splicing, via spliceosome"/>
    <property type="evidence" value="ECO:0000315"/>
    <property type="project" value="SGD"/>
</dbReference>
<dbReference type="GO" id="GO:0006364">
    <property type="term" value="P:rRNA processing"/>
    <property type="evidence" value="ECO:0000315"/>
    <property type="project" value="ComplexPortal"/>
</dbReference>
<dbReference type="GO" id="GO:0008033">
    <property type="term" value="P:tRNA processing"/>
    <property type="evidence" value="ECO:0000315"/>
    <property type="project" value="ComplexPortal"/>
</dbReference>
<dbReference type="CDD" id="cd01727">
    <property type="entry name" value="LSm8"/>
    <property type="match status" value="1"/>
</dbReference>
<dbReference type="DisProt" id="DP01401"/>
<dbReference type="FunFam" id="2.30.30.100:FF:000097">
    <property type="entry name" value="U6 snRNA-associated Sm-like protein LSm8"/>
    <property type="match status" value="1"/>
</dbReference>
<dbReference type="Gene3D" id="2.30.30.100">
    <property type="match status" value="1"/>
</dbReference>
<dbReference type="InterPro" id="IPR034103">
    <property type="entry name" value="Lsm8"/>
</dbReference>
<dbReference type="InterPro" id="IPR010920">
    <property type="entry name" value="LSM_dom_sf"/>
</dbReference>
<dbReference type="InterPro" id="IPR044642">
    <property type="entry name" value="PTHR15588"/>
</dbReference>
<dbReference type="InterPro" id="IPR047575">
    <property type="entry name" value="Sm"/>
</dbReference>
<dbReference type="InterPro" id="IPR001163">
    <property type="entry name" value="Sm_dom_euk/arc"/>
</dbReference>
<dbReference type="PANTHER" id="PTHR15588">
    <property type="entry name" value="LSM1"/>
    <property type="match status" value="1"/>
</dbReference>
<dbReference type="PANTHER" id="PTHR15588:SF9">
    <property type="entry name" value="U6 SNRNA-ASSOCIATED SM-LIKE PROTEIN LSM8"/>
    <property type="match status" value="1"/>
</dbReference>
<dbReference type="Pfam" id="PF01423">
    <property type="entry name" value="LSM"/>
    <property type="match status" value="1"/>
</dbReference>
<dbReference type="SMART" id="SM00651">
    <property type="entry name" value="Sm"/>
    <property type="match status" value="1"/>
</dbReference>
<dbReference type="SUPFAM" id="SSF50182">
    <property type="entry name" value="Sm-like ribonucleoproteins"/>
    <property type="match status" value="1"/>
</dbReference>
<dbReference type="PROSITE" id="PS52002">
    <property type="entry name" value="SM"/>
    <property type="match status" value="1"/>
</dbReference>
<feature type="chain" id="PRO_0000203088" description="LSM2-LSM8 complex subunit LSM8">
    <location>
        <begin position="1"/>
        <end position="109"/>
    </location>
</feature>
<feature type="domain" description="Sm" evidence="1">
    <location>
        <begin position="1"/>
        <end position="70"/>
    </location>
</feature>
<feature type="mutagenesis site" description="Reduces affinity for poly-U RNA ends." evidence="11">
    <original>R</original>
    <variation>A</variation>
    <location>
        <position position="57"/>
    </location>
</feature>
<feature type="mutagenesis site" description="Decreases binding affinity for U6 snRNA." evidence="12">
    <original>KDTKNK</original>
    <variation>AAAAAA</variation>
    <location>
        <begin position="87"/>
        <end position="92"/>
    </location>
</feature>
<feature type="helix" evidence="16">
    <location>
        <begin position="6"/>
        <end position="8"/>
    </location>
</feature>
<feature type="strand" evidence="16">
    <location>
        <begin position="11"/>
        <end position="17"/>
    </location>
</feature>
<feature type="turn" evidence="17">
    <location>
        <begin position="18"/>
        <end position="20"/>
    </location>
</feature>
<feature type="strand" evidence="16">
    <location>
        <begin position="22"/>
        <end position="30"/>
    </location>
</feature>
<feature type="strand" evidence="16">
    <location>
        <begin position="36"/>
        <end position="43"/>
    </location>
</feature>
<feature type="turn" evidence="16">
    <location>
        <begin position="44"/>
        <end position="47"/>
    </location>
</feature>
<feature type="strand" evidence="16">
    <location>
        <begin position="48"/>
        <end position="56"/>
    </location>
</feature>
<feature type="helix" evidence="16">
    <location>
        <begin position="58"/>
        <end position="60"/>
    </location>
</feature>
<feature type="strand" evidence="16">
    <location>
        <begin position="61"/>
        <end position="66"/>
    </location>
</feature>
<feature type="helix" evidence="18">
    <location>
        <begin position="97"/>
        <end position="106"/>
    </location>
</feature>
<sequence length="109" mass="12385">MSATLKDYLNKRVVIIKVDGECLIASLNGFDKNTNLFITNVFNRISKEFICKAQLLRGSEIALVGLIDAENDDSLAPIDEKKVPMLKDTKNKIENEHVIWEKVYESKTK</sequence>
<keyword id="KW-0002">3D-structure</keyword>
<keyword id="KW-0963">Cytoplasm</keyword>
<keyword id="KW-0507">mRNA processing</keyword>
<keyword id="KW-0508">mRNA splicing</keyword>
<keyword id="KW-0539">Nucleus</keyword>
<keyword id="KW-1185">Reference proteome</keyword>
<keyword id="KW-0687">Ribonucleoprotein</keyword>
<keyword id="KW-0694">RNA-binding</keyword>
<keyword id="KW-0698">rRNA processing</keyword>
<keyword id="KW-0747">Spliceosome</keyword>
<keyword id="KW-0819">tRNA processing</keyword>